<proteinExistence type="inferred from homology"/>
<name>PYRH_XANE5</name>
<comment type="function">
    <text evidence="1">Catalyzes the reversible phosphorylation of UMP to UDP.</text>
</comment>
<comment type="catalytic activity">
    <reaction evidence="1">
        <text>UMP + ATP = UDP + ADP</text>
        <dbReference type="Rhea" id="RHEA:24400"/>
        <dbReference type="ChEBI" id="CHEBI:30616"/>
        <dbReference type="ChEBI" id="CHEBI:57865"/>
        <dbReference type="ChEBI" id="CHEBI:58223"/>
        <dbReference type="ChEBI" id="CHEBI:456216"/>
        <dbReference type="EC" id="2.7.4.22"/>
    </reaction>
</comment>
<comment type="activity regulation">
    <text evidence="1">Inhibited by UTP.</text>
</comment>
<comment type="pathway">
    <text evidence="1">Pyrimidine metabolism; CTP biosynthesis via de novo pathway; UDP from UMP (UMPK route): step 1/1.</text>
</comment>
<comment type="subunit">
    <text evidence="1">Homohexamer.</text>
</comment>
<comment type="subcellular location">
    <subcellularLocation>
        <location evidence="1">Cytoplasm</location>
    </subcellularLocation>
</comment>
<comment type="similarity">
    <text evidence="1">Belongs to the UMP kinase family.</text>
</comment>
<gene>
    <name evidence="1" type="primary">pyrH</name>
    <name type="ordered locus">XCV1476</name>
</gene>
<organism>
    <name type="scientific">Xanthomonas euvesicatoria pv. vesicatoria (strain 85-10)</name>
    <name type="common">Xanthomonas campestris pv. vesicatoria</name>
    <dbReference type="NCBI Taxonomy" id="316273"/>
    <lineage>
        <taxon>Bacteria</taxon>
        <taxon>Pseudomonadati</taxon>
        <taxon>Pseudomonadota</taxon>
        <taxon>Gammaproteobacteria</taxon>
        <taxon>Lysobacterales</taxon>
        <taxon>Lysobacteraceae</taxon>
        <taxon>Xanthomonas</taxon>
    </lineage>
</organism>
<reference key="1">
    <citation type="journal article" date="2005" name="J. Bacteriol.">
        <title>Insights into genome plasticity and pathogenicity of the plant pathogenic Bacterium Xanthomonas campestris pv. vesicatoria revealed by the complete genome sequence.</title>
        <authorList>
            <person name="Thieme F."/>
            <person name="Koebnik R."/>
            <person name="Bekel T."/>
            <person name="Berger C."/>
            <person name="Boch J."/>
            <person name="Buettner D."/>
            <person name="Caldana C."/>
            <person name="Gaigalat L."/>
            <person name="Goesmann A."/>
            <person name="Kay S."/>
            <person name="Kirchner O."/>
            <person name="Lanz C."/>
            <person name="Linke B."/>
            <person name="McHardy A.C."/>
            <person name="Meyer F."/>
            <person name="Mittenhuber G."/>
            <person name="Nies D.H."/>
            <person name="Niesbach-Kloesgen U."/>
            <person name="Patschkowski T."/>
            <person name="Rueckert C."/>
            <person name="Rupp O."/>
            <person name="Schneiker S."/>
            <person name="Schuster S.C."/>
            <person name="Vorhoelter F.J."/>
            <person name="Weber E."/>
            <person name="Puehler A."/>
            <person name="Bonas U."/>
            <person name="Bartels D."/>
            <person name="Kaiser O."/>
        </authorList>
    </citation>
    <scope>NUCLEOTIDE SEQUENCE [LARGE SCALE GENOMIC DNA]</scope>
    <source>
        <strain>85-10</strain>
    </source>
</reference>
<feature type="chain" id="PRO_1000054052" description="Uridylate kinase">
    <location>
        <begin position="1"/>
        <end position="240"/>
    </location>
</feature>
<feature type="binding site" evidence="1">
    <location>
        <begin position="12"/>
        <end position="15"/>
    </location>
    <ligand>
        <name>ATP</name>
        <dbReference type="ChEBI" id="CHEBI:30616"/>
    </ligand>
</feature>
<feature type="binding site" evidence="1">
    <location>
        <position position="54"/>
    </location>
    <ligand>
        <name>UMP</name>
        <dbReference type="ChEBI" id="CHEBI:57865"/>
    </ligand>
</feature>
<feature type="binding site" evidence="1">
    <location>
        <position position="55"/>
    </location>
    <ligand>
        <name>ATP</name>
        <dbReference type="ChEBI" id="CHEBI:30616"/>
    </ligand>
</feature>
<feature type="binding site" evidence="1">
    <location>
        <position position="59"/>
    </location>
    <ligand>
        <name>ATP</name>
        <dbReference type="ChEBI" id="CHEBI:30616"/>
    </ligand>
</feature>
<feature type="binding site" evidence="1">
    <location>
        <position position="74"/>
    </location>
    <ligand>
        <name>UMP</name>
        <dbReference type="ChEBI" id="CHEBI:57865"/>
    </ligand>
</feature>
<feature type="binding site" evidence="1">
    <location>
        <begin position="135"/>
        <end position="142"/>
    </location>
    <ligand>
        <name>UMP</name>
        <dbReference type="ChEBI" id="CHEBI:57865"/>
    </ligand>
</feature>
<feature type="binding site" evidence="1">
    <location>
        <position position="162"/>
    </location>
    <ligand>
        <name>ATP</name>
        <dbReference type="ChEBI" id="CHEBI:30616"/>
    </ligand>
</feature>
<feature type="binding site" evidence="1">
    <location>
        <position position="168"/>
    </location>
    <ligand>
        <name>ATP</name>
        <dbReference type="ChEBI" id="CHEBI:30616"/>
    </ligand>
</feature>
<feature type="binding site" evidence="1">
    <location>
        <position position="171"/>
    </location>
    <ligand>
        <name>ATP</name>
        <dbReference type="ChEBI" id="CHEBI:30616"/>
    </ligand>
</feature>
<evidence type="ECO:0000255" key="1">
    <source>
        <dbReference type="HAMAP-Rule" id="MF_01220"/>
    </source>
</evidence>
<protein>
    <recommendedName>
        <fullName evidence="1">Uridylate kinase</fullName>
        <shortName evidence="1">UK</shortName>
        <ecNumber evidence="1">2.7.4.22</ecNumber>
    </recommendedName>
    <alternativeName>
        <fullName evidence="1">Uridine monophosphate kinase</fullName>
        <shortName evidence="1">UMP kinase</shortName>
        <shortName evidence="1">UMPK</shortName>
    </alternativeName>
</protein>
<sequence length="240" mass="25805">MSELSYRRILLKLSGEALMGDGDYGIDPKVINRLAHEVIEAQQAGAQVALVIGGGNIFRGAGLAASGMDRVTGDHMGMLATVINALAMQDALEKLGAKVRVMSAIKINDVCEDFIRRRAIRHLEKGRIAIFAAGTGNPFFTTDSGAALRAIEIGADLLLKATKVDGVYDKDPKKHTDAVRYDSLTYDQVILQGLEVMDTAAFALARDSDLPLRIFGMSEPGVLLRILHGEQIGTLVQGRS</sequence>
<keyword id="KW-0067">ATP-binding</keyword>
<keyword id="KW-0963">Cytoplasm</keyword>
<keyword id="KW-0418">Kinase</keyword>
<keyword id="KW-0547">Nucleotide-binding</keyword>
<keyword id="KW-0665">Pyrimidine biosynthesis</keyword>
<keyword id="KW-0808">Transferase</keyword>
<dbReference type="EC" id="2.7.4.22" evidence="1"/>
<dbReference type="EMBL" id="AM039952">
    <property type="protein sequence ID" value="CAJ23107.1"/>
    <property type="molecule type" value="Genomic_DNA"/>
</dbReference>
<dbReference type="RefSeq" id="WP_005911727.1">
    <property type="nucleotide sequence ID" value="NZ_CP017190.1"/>
</dbReference>
<dbReference type="SMR" id="Q3BVK6"/>
<dbReference type="STRING" id="456327.BJD11_15265"/>
<dbReference type="GeneID" id="97509773"/>
<dbReference type="KEGG" id="xcv:XCV1476"/>
<dbReference type="eggNOG" id="COG0528">
    <property type="taxonomic scope" value="Bacteria"/>
</dbReference>
<dbReference type="HOGENOM" id="CLU_033861_0_0_6"/>
<dbReference type="UniPathway" id="UPA00159">
    <property type="reaction ID" value="UER00275"/>
</dbReference>
<dbReference type="Proteomes" id="UP000007069">
    <property type="component" value="Chromosome"/>
</dbReference>
<dbReference type="GO" id="GO:0005829">
    <property type="term" value="C:cytosol"/>
    <property type="evidence" value="ECO:0007669"/>
    <property type="project" value="TreeGrafter"/>
</dbReference>
<dbReference type="GO" id="GO:0005524">
    <property type="term" value="F:ATP binding"/>
    <property type="evidence" value="ECO:0007669"/>
    <property type="project" value="UniProtKB-KW"/>
</dbReference>
<dbReference type="GO" id="GO:0033862">
    <property type="term" value="F:UMP kinase activity"/>
    <property type="evidence" value="ECO:0007669"/>
    <property type="project" value="UniProtKB-EC"/>
</dbReference>
<dbReference type="GO" id="GO:0044210">
    <property type="term" value="P:'de novo' CTP biosynthetic process"/>
    <property type="evidence" value="ECO:0007669"/>
    <property type="project" value="UniProtKB-UniRule"/>
</dbReference>
<dbReference type="GO" id="GO:0006225">
    <property type="term" value="P:UDP biosynthetic process"/>
    <property type="evidence" value="ECO:0007669"/>
    <property type="project" value="TreeGrafter"/>
</dbReference>
<dbReference type="CDD" id="cd04254">
    <property type="entry name" value="AAK_UMPK-PyrH-Ec"/>
    <property type="match status" value="1"/>
</dbReference>
<dbReference type="FunFam" id="3.40.1160.10:FF:000001">
    <property type="entry name" value="Uridylate kinase"/>
    <property type="match status" value="1"/>
</dbReference>
<dbReference type="Gene3D" id="3.40.1160.10">
    <property type="entry name" value="Acetylglutamate kinase-like"/>
    <property type="match status" value="1"/>
</dbReference>
<dbReference type="HAMAP" id="MF_01220_B">
    <property type="entry name" value="PyrH_B"/>
    <property type="match status" value="1"/>
</dbReference>
<dbReference type="InterPro" id="IPR036393">
    <property type="entry name" value="AceGlu_kinase-like_sf"/>
</dbReference>
<dbReference type="InterPro" id="IPR001048">
    <property type="entry name" value="Asp/Glu/Uridylate_kinase"/>
</dbReference>
<dbReference type="InterPro" id="IPR011817">
    <property type="entry name" value="Uridylate_kinase"/>
</dbReference>
<dbReference type="InterPro" id="IPR015963">
    <property type="entry name" value="Uridylate_kinase_bac"/>
</dbReference>
<dbReference type="NCBIfam" id="TIGR02075">
    <property type="entry name" value="pyrH_bact"/>
    <property type="match status" value="1"/>
</dbReference>
<dbReference type="PANTHER" id="PTHR42833">
    <property type="entry name" value="URIDYLATE KINASE"/>
    <property type="match status" value="1"/>
</dbReference>
<dbReference type="PANTHER" id="PTHR42833:SF4">
    <property type="entry name" value="URIDYLATE KINASE PUMPKIN, CHLOROPLASTIC"/>
    <property type="match status" value="1"/>
</dbReference>
<dbReference type="Pfam" id="PF00696">
    <property type="entry name" value="AA_kinase"/>
    <property type="match status" value="1"/>
</dbReference>
<dbReference type="PIRSF" id="PIRSF005650">
    <property type="entry name" value="Uridylate_kin"/>
    <property type="match status" value="1"/>
</dbReference>
<dbReference type="SUPFAM" id="SSF53633">
    <property type="entry name" value="Carbamate kinase-like"/>
    <property type="match status" value="1"/>
</dbReference>
<accession>Q3BVK6</accession>